<organism>
    <name type="scientific">Oryctolagus cuniculus</name>
    <name type="common">Rabbit</name>
    <dbReference type="NCBI Taxonomy" id="9986"/>
    <lineage>
        <taxon>Eukaryota</taxon>
        <taxon>Metazoa</taxon>
        <taxon>Chordata</taxon>
        <taxon>Craniata</taxon>
        <taxon>Vertebrata</taxon>
        <taxon>Euteleostomi</taxon>
        <taxon>Mammalia</taxon>
        <taxon>Eutheria</taxon>
        <taxon>Euarchontoglires</taxon>
        <taxon>Glires</taxon>
        <taxon>Lagomorpha</taxon>
        <taxon>Leporidae</taxon>
        <taxon>Oryctolagus</taxon>
    </lineage>
</organism>
<protein>
    <recommendedName>
        <fullName>Large ribosomal subunit protein uL14</fullName>
    </recommendedName>
    <alternativeName>
        <fullName>60S ribosomal protein L23</fullName>
    </alternativeName>
</protein>
<keyword id="KW-0002">3D-structure</keyword>
<keyword id="KW-0963">Cytoplasm</keyword>
<keyword id="KW-0597">Phosphoprotein</keyword>
<keyword id="KW-1185">Reference proteome</keyword>
<keyword id="KW-0687">Ribonucleoprotein</keyword>
<keyword id="KW-0689">Ribosomal protein</keyword>
<evidence type="ECO:0000250" key="1">
    <source>
        <dbReference type="UniProtKB" id="P62829"/>
    </source>
</evidence>
<evidence type="ECO:0000269" key="2">
    <source>
    </source>
</evidence>
<evidence type="ECO:0000269" key="3">
    <source>
    </source>
</evidence>
<evidence type="ECO:0000269" key="4">
    <source>
    </source>
</evidence>
<evidence type="ECO:0000269" key="5">
    <source>
    </source>
</evidence>
<evidence type="ECO:0000269" key="6">
    <source>
    </source>
</evidence>
<evidence type="ECO:0000269" key="7">
    <source>
    </source>
</evidence>
<evidence type="ECO:0000269" key="8">
    <source>
    </source>
</evidence>
<evidence type="ECO:0000269" key="9">
    <source>
    </source>
</evidence>
<evidence type="ECO:0000269" key="10">
    <source>
    </source>
</evidence>
<evidence type="ECO:0000269" key="11">
    <source>
    </source>
</evidence>
<evidence type="ECO:0000269" key="12">
    <source>
    </source>
</evidence>
<evidence type="ECO:0000269" key="13">
    <source>
    </source>
</evidence>
<evidence type="ECO:0000305" key="14"/>
<evidence type="ECO:0007744" key="15">
    <source>
        <dbReference type="PDB" id="3JAG"/>
    </source>
</evidence>
<evidence type="ECO:0007744" key="16">
    <source>
        <dbReference type="PDB" id="3JAH"/>
    </source>
</evidence>
<evidence type="ECO:0007744" key="17">
    <source>
        <dbReference type="PDB" id="5LZS"/>
    </source>
</evidence>
<evidence type="ECO:0007744" key="18">
    <source>
        <dbReference type="PDB" id="5LZT"/>
    </source>
</evidence>
<evidence type="ECO:0007744" key="19">
    <source>
        <dbReference type="PDB" id="6D90"/>
    </source>
</evidence>
<evidence type="ECO:0007744" key="20">
    <source>
        <dbReference type="PDB" id="6D9J"/>
    </source>
</evidence>
<evidence type="ECO:0007744" key="21">
    <source>
        <dbReference type="PDB" id="6GZ3"/>
    </source>
</evidence>
<evidence type="ECO:0007744" key="22">
    <source>
        <dbReference type="PDB" id="6HCF"/>
    </source>
</evidence>
<evidence type="ECO:0007744" key="23">
    <source>
        <dbReference type="PDB" id="6HCJ"/>
    </source>
</evidence>
<evidence type="ECO:0007744" key="24">
    <source>
        <dbReference type="PDB" id="6MTB"/>
    </source>
</evidence>
<evidence type="ECO:0007744" key="25">
    <source>
        <dbReference type="PDB" id="6MTC"/>
    </source>
</evidence>
<evidence type="ECO:0007744" key="26">
    <source>
        <dbReference type="PDB" id="6P5I"/>
    </source>
</evidence>
<evidence type="ECO:0007744" key="27">
    <source>
        <dbReference type="PDB" id="6P5J"/>
    </source>
</evidence>
<evidence type="ECO:0007744" key="28">
    <source>
        <dbReference type="PDB" id="6R5Q"/>
    </source>
</evidence>
<evidence type="ECO:0007744" key="29">
    <source>
        <dbReference type="PDB" id="6R6G"/>
    </source>
</evidence>
<evidence type="ECO:0007744" key="30">
    <source>
        <dbReference type="PDB" id="6SGC"/>
    </source>
</evidence>
<evidence type="ECO:0007744" key="31">
    <source>
        <dbReference type="PDB" id="6ZVK"/>
    </source>
</evidence>
<evidence type="ECO:0007744" key="32">
    <source>
        <dbReference type="PDB" id="7A01"/>
    </source>
</evidence>
<evidence type="ECO:0007744" key="33">
    <source>
        <dbReference type="PDB" id="7OYD"/>
    </source>
</evidence>
<evidence type="ECO:0007744" key="34">
    <source>
        <dbReference type="PDB" id="7UCJ"/>
    </source>
</evidence>
<evidence type="ECO:0007744" key="35">
    <source>
        <dbReference type="PDB" id="7UCK"/>
    </source>
</evidence>
<comment type="function">
    <text evidence="2 3 7">Component of the large ribosomal subunit (PubMed:26245381, PubMed:27863242, PubMed:30517857). The ribosome is a large ribonucleoprotein complex responsible for the synthesis of proteins in the cell (PubMed:26245381, PubMed:27863242, PubMed:30517857).</text>
</comment>
<comment type="subunit">
    <text evidence="2 3 4 5 6 7 8 9 10 11 12 13">Component of the large ribosomal subunit.</text>
</comment>
<comment type="subcellular location">
    <subcellularLocation>
        <location evidence="2 3 4 5 6 7 8 9 10 11 12 13">Cytoplasm</location>
    </subcellularLocation>
</comment>
<comment type="similarity">
    <text evidence="14">Belongs to the universal ribosomal protein uL14 family.</text>
</comment>
<gene>
    <name type="primary">RPL23</name>
</gene>
<dbReference type="EMBL" id="AAGW02039657">
    <property type="status" value="NOT_ANNOTATED_CDS"/>
    <property type="molecule type" value="Genomic_DNA"/>
</dbReference>
<dbReference type="RefSeq" id="XP_002719380.3">
    <property type="nucleotide sequence ID" value="XM_002719334.5"/>
</dbReference>
<dbReference type="PDB" id="3JAG">
    <property type="method" value="EM"/>
    <property type="resolution" value="3.65 A"/>
    <property type="chains" value="V=10-140"/>
</dbReference>
<dbReference type="PDB" id="3JAH">
    <property type="method" value="EM"/>
    <property type="resolution" value="3.45 A"/>
    <property type="chains" value="V=10-140"/>
</dbReference>
<dbReference type="PDB" id="3JAI">
    <property type="method" value="EM"/>
    <property type="resolution" value="3.65 A"/>
    <property type="chains" value="V=10-140"/>
</dbReference>
<dbReference type="PDB" id="5LZS">
    <property type="method" value="EM"/>
    <property type="resolution" value="3.31 A"/>
    <property type="chains" value="V=1-140"/>
</dbReference>
<dbReference type="PDB" id="5LZT">
    <property type="method" value="EM"/>
    <property type="resolution" value="3.65 A"/>
    <property type="chains" value="V=1-140"/>
</dbReference>
<dbReference type="PDB" id="5LZU">
    <property type="method" value="EM"/>
    <property type="resolution" value="3.75 A"/>
    <property type="chains" value="V=1-140"/>
</dbReference>
<dbReference type="PDB" id="5LZV">
    <property type="method" value="EM"/>
    <property type="resolution" value="3.35 A"/>
    <property type="chains" value="V=1-140"/>
</dbReference>
<dbReference type="PDB" id="5LZW">
    <property type="method" value="EM"/>
    <property type="resolution" value="3.53 A"/>
    <property type="chains" value="V=1-140"/>
</dbReference>
<dbReference type="PDB" id="5LZX">
    <property type="method" value="EM"/>
    <property type="resolution" value="3.67 A"/>
    <property type="chains" value="V=1-140"/>
</dbReference>
<dbReference type="PDB" id="5LZY">
    <property type="method" value="EM"/>
    <property type="resolution" value="3.99 A"/>
    <property type="chains" value="V=1-140"/>
</dbReference>
<dbReference type="PDB" id="5LZZ">
    <property type="method" value="EM"/>
    <property type="resolution" value="3.47 A"/>
    <property type="chains" value="V=1-140"/>
</dbReference>
<dbReference type="PDB" id="6D90">
    <property type="method" value="EM"/>
    <property type="resolution" value="3.20 A"/>
    <property type="chains" value="V=1-140"/>
</dbReference>
<dbReference type="PDB" id="6D9J">
    <property type="method" value="EM"/>
    <property type="resolution" value="3.20 A"/>
    <property type="chains" value="V=1-140"/>
</dbReference>
<dbReference type="PDB" id="6FTG">
    <property type="method" value="EM"/>
    <property type="resolution" value="9.10 A"/>
    <property type="chains" value="V=10-140"/>
</dbReference>
<dbReference type="PDB" id="6FTI">
    <property type="method" value="EM"/>
    <property type="resolution" value="4.20 A"/>
    <property type="chains" value="V=10-140"/>
</dbReference>
<dbReference type="PDB" id="6FTJ">
    <property type="method" value="EM"/>
    <property type="resolution" value="4.70 A"/>
    <property type="chains" value="V=10-140"/>
</dbReference>
<dbReference type="PDB" id="6GZ3">
    <property type="method" value="EM"/>
    <property type="resolution" value="3.60 A"/>
    <property type="chains" value="AV=12-140"/>
</dbReference>
<dbReference type="PDB" id="6HCF">
    <property type="method" value="EM"/>
    <property type="resolution" value="3.90 A"/>
    <property type="chains" value="V3=1-140"/>
</dbReference>
<dbReference type="PDB" id="6HCJ">
    <property type="method" value="EM"/>
    <property type="resolution" value="3.80 A"/>
    <property type="chains" value="V3=1-140"/>
</dbReference>
<dbReference type="PDB" id="6HCM">
    <property type="method" value="EM"/>
    <property type="resolution" value="6.80 A"/>
    <property type="chains" value="V3=1-140"/>
</dbReference>
<dbReference type="PDB" id="6HCQ">
    <property type="method" value="EM"/>
    <property type="resolution" value="6.50 A"/>
    <property type="chains" value="V3=1-140"/>
</dbReference>
<dbReference type="PDB" id="6MTB">
    <property type="method" value="EM"/>
    <property type="resolution" value="3.60 A"/>
    <property type="chains" value="V=10-140"/>
</dbReference>
<dbReference type="PDB" id="6MTC">
    <property type="method" value="EM"/>
    <property type="resolution" value="3.40 A"/>
    <property type="chains" value="V=10-140"/>
</dbReference>
<dbReference type="PDB" id="6MTD">
    <property type="method" value="EM"/>
    <property type="resolution" value="3.30 A"/>
    <property type="chains" value="V=10-140"/>
</dbReference>
<dbReference type="PDB" id="6MTE">
    <property type="method" value="EM"/>
    <property type="resolution" value="3.40 A"/>
    <property type="chains" value="V=10-140"/>
</dbReference>
<dbReference type="PDB" id="6P5I">
    <property type="method" value="EM"/>
    <property type="resolution" value="3.10 A"/>
    <property type="chains" value="AV=1-140"/>
</dbReference>
<dbReference type="PDB" id="6P5J">
    <property type="method" value="EM"/>
    <property type="resolution" value="3.10 A"/>
    <property type="chains" value="AV=1-140"/>
</dbReference>
<dbReference type="PDB" id="6P5K">
    <property type="method" value="EM"/>
    <property type="resolution" value="3.10 A"/>
    <property type="chains" value="AV=1-140"/>
</dbReference>
<dbReference type="PDB" id="6P5N">
    <property type="method" value="EM"/>
    <property type="resolution" value="3.20 A"/>
    <property type="chains" value="AV=1-140"/>
</dbReference>
<dbReference type="PDB" id="6R5Q">
    <property type="method" value="EM"/>
    <property type="resolution" value="3.00 A"/>
    <property type="chains" value="V=10-140"/>
</dbReference>
<dbReference type="PDB" id="6R6G">
    <property type="method" value="EM"/>
    <property type="resolution" value="3.70 A"/>
    <property type="chains" value="V=10-140"/>
</dbReference>
<dbReference type="PDB" id="6R6P">
    <property type="method" value="EM"/>
    <property type="resolution" value="3.10 A"/>
    <property type="chains" value="V=10-140"/>
</dbReference>
<dbReference type="PDB" id="6R7Q">
    <property type="method" value="EM"/>
    <property type="resolution" value="3.90 A"/>
    <property type="chains" value="V=10-140"/>
</dbReference>
<dbReference type="PDB" id="6SGC">
    <property type="method" value="EM"/>
    <property type="resolution" value="2.80 A"/>
    <property type="chains" value="V2=1-140"/>
</dbReference>
<dbReference type="PDB" id="6T59">
    <property type="method" value="EM"/>
    <property type="resolution" value="3.11 A"/>
    <property type="chains" value="V3=1-140"/>
</dbReference>
<dbReference type="PDB" id="6ZVK">
    <property type="method" value="EM"/>
    <property type="resolution" value="3.49 A"/>
    <property type="chains" value="k2=10-140"/>
</dbReference>
<dbReference type="PDB" id="7A01">
    <property type="method" value="EM"/>
    <property type="resolution" value="3.60 A"/>
    <property type="chains" value="k2=10-140"/>
</dbReference>
<dbReference type="PDB" id="7MDZ">
    <property type="method" value="EM"/>
    <property type="resolution" value="3.20 A"/>
    <property type="chains" value="V=1-140"/>
</dbReference>
<dbReference type="PDB" id="7NFX">
    <property type="method" value="EM"/>
    <property type="resolution" value="3.20 A"/>
    <property type="chains" value="V=1-140"/>
</dbReference>
<dbReference type="PDB" id="7NWG">
    <property type="method" value="EM"/>
    <property type="resolution" value="3.80 A"/>
    <property type="chains" value="V3=10-140"/>
</dbReference>
<dbReference type="PDB" id="7NWI">
    <property type="method" value="EM"/>
    <property type="resolution" value="3.13 A"/>
    <property type="chains" value="V=10-140"/>
</dbReference>
<dbReference type="PDB" id="7O7Y">
    <property type="method" value="EM"/>
    <property type="resolution" value="2.20 A"/>
    <property type="chains" value="BV=1-140"/>
</dbReference>
<dbReference type="PDB" id="7O7Z">
    <property type="method" value="EM"/>
    <property type="resolution" value="2.40 A"/>
    <property type="chains" value="BV=1-140"/>
</dbReference>
<dbReference type="PDB" id="7O80">
    <property type="method" value="EM"/>
    <property type="resolution" value="2.90 A"/>
    <property type="chains" value="BV=1-140"/>
</dbReference>
<dbReference type="PDB" id="7O81">
    <property type="method" value="EM"/>
    <property type="resolution" value="3.10 A"/>
    <property type="chains" value="BV=1-140"/>
</dbReference>
<dbReference type="PDB" id="7OBR">
    <property type="method" value="EM"/>
    <property type="resolution" value="2.80 A"/>
    <property type="chains" value="V=1-140"/>
</dbReference>
<dbReference type="PDB" id="7OYD">
    <property type="method" value="EM"/>
    <property type="resolution" value="2.30 A"/>
    <property type="chains" value="V=1-140"/>
</dbReference>
<dbReference type="PDB" id="7QWQ">
    <property type="method" value="EM"/>
    <property type="resolution" value="2.83 A"/>
    <property type="chains" value="V=1-140"/>
</dbReference>
<dbReference type="PDB" id="7QWR">
    <property type="method" value="EM"/>
    <property type="resolution" value="2.90 A"/>
    <property type="chains" value="V=1-140"/>
</dbReference>
<dbReference type="PDB" id="7QWS">
    <property type="method" value="EM"/>
    <property type="resolution" value="3.40 A"/>
    <property type="chains" value="V=1-140"/>
</dbReference>
<dbReference type="PDB" id="7TM3">
    <property type="method" value="EM"/>
    <property type="resolution" value="3.25 A"/>
    <property type="chains" value="V=1-140"/>
</dbReference>
<dbReference type="PDB" id="7TOQ">
    <property type="method" value="EM"/>
    <property type="resolution" value="3.10 A"/>
    <property type="chains" value="AL23=10-140"/>
</dbReference>
<dbReference type="PDB" id="7TOR">
    <property type="method" value="EM"/>
    <property type="resolution" value="2.90 A"/>
    <property type="chains" value="AL23=10-140"/>
</dbReference>
<dbReference type="PDB" id="7TUT">
    <property type="method" value="EM"/>
    <property type="resolution" value="3.88 A"/>
    <property type="chains" value="V=1-140"/>
</dbReference>
<dbReference type="PDB" id="7UCJ">
    <property type="method" value="EM"/>
    <property type="resolution" value="3.10 A"/>
    <property type="chains" value="V=11-140"/>
</dbReference>
<dbReference type="PDB" id="7UCK">
    <property type="method" value="EM"/>
    <property type="resolution" value="2.80 A"/>
    <property type="chains" value="V=10-140"/>
</dbReference>
<dbReference type="PDB" id="8B5L">
    <property type="method" value="EM"/>
    <property type="resolution" value="2.86 A"/>
    <property type="chains" value="V=10-140"/>
</dbReference>
<dbReference type="PDB" id="8B6C">
    <property type="method" value="EM"/>
    <property type="resolution" value="2.79 A"/>
    <property type="chains" value="V=10-140"/>
</dbReference>
<dbReference type="PDB" id="8BPO">
    <property type="method" value="EM"/>
    <property type="resolution" value="2.80 A"/>
    <property type="chains" value="U2=1-140"/>
</dbReference>
<dbReference type="PDB" id="8BTK">
    <property type="method" value="EM"/>
    <property type="resolution" value="3.50 A"/>
    <property type="chains" value="BV=1-140"/>
</dbReference>
<dbReference type="PDB" id="8P2K">
    <property type="method" value="EM"/>
    <property type="resolution" value="2.90 A"/>
    <property type="chains" value="BV=1-140"/>
</dbReference>
<dbReference type="PDB" id="8RJB">
    <property type="method" value="EM"/>
    <property type="resolution" value="2.69 A"/>
    <property type="chains" value="V=1-140"/>
</dbReference>
<dbReference type="PDB" id="8RJC">
    <property type="method" value="EM"/>
    <property type="resolution" value="2.90 A"/>
    <property type="chains" value="V=1-140"/>
</dbReference>
<dbReference type="PDB" id="8RJD">
    <property type="method" value="EM"/>
    <property type="resolution" value="2.79 A"/>
    <property type="chains" value="V=1-140"/>
</dbReference>
<dbReference type="PDB" id="8SCB">
    <property type="method" value="EM"/>
    <property type="resolution" value="2.50 A"/>
    <property type="chains" value="V=1-140"/>
</dbReference>
<dbReference type="PDB" id="8VFT">
    <property type="method" value="EM"/>
    <property type="resolution" value="3.30 A"/>
    <property type="chains" value="V=1-140"/>
</dbReference>
<dbReference type="PDB" id="9BDL">
    <property type="method" value="EM"/>
    <property type="resolution" value="2.80 A"/>
    <property type="chains" value="AL23=10-140"/>
</dbReference>
<dbReference type="PDB" id="9BDN">
    <property type="method" value="EM"/>
    <property type="resolution" value="3.10 A"/>
    <property type="chains" value="AL23=10-140"/>
</dbReference>
<dbReference type="PDB" id="9BDP">
    <property type="method" value="EM"/>
    <property type="resolution" value="3.70 A"/>
    <property type="chains" value="AL23=10-140"/>
</dbReference>
<dbReference type="PDB" id="9F1B">
    <property type="method" value="EM"/>
    <property type="resolution" value="3.01 A"/>
    <property type="chains" value="BV=1-140"/>
</dbReference>
<dbReference type="PDB" id="9F1C">
    <property type="method" value="EM"/>
    <property type="resolution" value="3.78 A"/>
    <property type="chains" value="BV=1-140"/>
</dbReference>
<dbReference type="PDB" id="9F1D">
    <property type="method" value="EM"/>
    <property type="resolution" value="3.26 A"/>
    <property type="chains" value="BV=1-140"/>
</dbReference>
<dbReference type="PDBsum" id="3JAG"/>
<dbReference type="PDBsum" id="3JAH"/>
<dbReference type="PDBsum" id="3JAI"/>
<dbReference type="PDBsum" id="5LZS"/>
<dbReference type="PDBsum" id="5LZT"/>
<dbReference type="PDBsum" id="5LZU"/>
<dbReference type="PDBsum" id="5LZV"/>
<dbReference type="PDBsum" id="5LZW"/>
<dbReference type="PDBsum" id="5LZX"/>
<dbReference type="PDBsum" id="5LZY"/>
<dbReference type="PDBsum" id="5LZZ"/>
<dbReference type="PDBsum" id="6D90"/>
<dbReference type="PDBsum" id="6D9J"/>
<dbReference type="PDBsum" id="6FTG"/>
<dbReference type="PDBsum" id="6FTI"/>
<dbReference type="PDBsum" id="6FTJ"/>
<dbReference type="PDBsum" id="6GZ3"/>
<dbReference type="PDBsum" id="6HCF"/>
<dbReference type="PDBsum" id="6HCJ"/>
<dbReference type="PDBsum" id="6HCM"/>
<dbReference type="PDBsum" id="6HCQ"/>
<dbReference type="PDBsum" id="6MTB"/>
<dbReference type="PDBsum" id="6MTC"/>
<dbReference type="PDBsum" id="6MTD"/>
<dbReference type="PDBsum" id="6MTE"/>
<dbReference type="PDBsum" id="6P5I"/>
<dbReference type="PDBsum" id="6P5J"/>
<dbReference type="PDBsum" id="6P5K"/>
<dbReference type="PDBsum" id="6P5N"/>
<dbReference type="PDBsum" id="6R5Q"/>
<dbReference type="PDBsum" id="6R6G"/>
<dbReference type="PDBsum" id="6R6P"/>
<dbReference type="PDBsum" id="6R7Q"/>
<dbReference type="PDBsum" id="6SGC"/>
<dbReference type="PDBsum" id="6T59"/>
<dbReference type="PDBsum" id="6ZVK"/>
<dbReference type="PDBsum" id="7A01"/>
<dbReference type="PDBsum" id="7MDZ"/>
<dbReference type="PDBsum" id="7NFX"/>
<dbReference type="PDBsum" id="7NWG"/>
<dbReference type="PDBsum" id="7NWI"/>
<dbReference type="PDBsum" id="7O7Y"/>
<dbReference type="PDBsum" id="7O7Z"/>
<dbReference type="PDBsum" id="7O80"/>
<dbReference type="PDBsum" id="7O81"/>
<dbReference type="PDBsum" id="7OBR"/>
<dbReference type="PDBsum" id="7OYD"/>
<dbReference type="PDBsum" id="7QWQ"/>
<dbReference type="PDBsum" id="7QWR"/>
<dbReference type="PDBsum" id="7QWS"/>
<dbReference type="PDBsum" id="7TM3"/>
<dbReference type="PDBsum" id="7TOQ"/>
<dbReference type="PDBsum" id="7TOR"/>
<dbReference type="PDBsum" id="7TUT"/>
<dbReference type="PDBsum" id="7UCJ"/>
<dbReference type="PDBsum" id="7UCK"/>
<dbReference type="PDBsum" id="8B5L"/>
<dbReference type="PDBsum" id="8B6C"/>
<dbReference type="PDBsum" id="8BPO"/>
<dbReference type="PDBsum" id="8BTK"/>
<dbReference type="PDBsum" id="8P2K"/>
<dbReference type="PDBsum" id="8RJB"/>
<dbReference type="PDBsum" id="8RJC"/>
<dbReference type="PDBsum" id="8RJD"/>
<dbReference type="PDBsum" id="8SCB"/>
<dbReference type="PDBsum" id="8VFT"/>
<dbReference type="PDBsum" id="9BDL"/>
<dbReference type="PDBsum" id="9BDN"/>
<dbReference type="PDBsum" id="9BDP"/>
<dbReference type="PDBsum" id="9F1B"/>
<dbReference type="PDBsum" id="9F1C"/>
<dbReference type="PDBsum" id="9F1D"/>
<dbReference type="EMDB" id="EMD-0098"/>
<dbReference type="EMDB" id="EMD-0099"/>
<dbReference type="EMDB" id="EMD-0100"/>
<dbReference type="EMDB" id="EMD-0192"/>
<dbReference type="EMDB" id="EMD-0194"/>
<dbReference type="EMDB" id="EMD-0195"/>
<dbReference type="EMDB" id="EMD-0197"/>
<dbReference type="EMDB" id="EMD-10181"/>
<dbReference type="EMDB" id="EMD-10380"/>
<dbReference type="EMDB" id="EMD-11459"/>
<dbReference type="EMDB" id="EMD-11590"/>
<dbReference type="EMDB" id="EMD-12303"/>
<dbReference type="EMDB" id="EMD-12631"/>
<dbReference type="EMDB" id="EMD-12633"/>
<dbReference type="EMDB" id="EMD-12756"/>
<dbReference type="EMDB" id="EMD-12757"/>
<dbReference type="EMDB" id="EMD-12758"/>
<dbReference type="EMDB" id="EMD-12759"/>
<dbReference type="EMDB" id="EMD-12801"/>
<dbReference type="EMDB" id="EMD-13114"/>
<dbReference type="EMDB" id="EMD-14191"/>
<dbReference type="EMDB" id="EMD-14192"/>
<dbReference type="EMDB" id="EMD-14193"/>
<dbReference type="EMDB" id="EMD-15860"/>
<dbReference type="EMDB" id="EMD-15863"/>
<dbReference type="EMDB" id="EMD-16155"/>
<dbReference type="EMDB" id="EMD-16232"/>
<dbReference type="EMDB" id="EMD-17367"/>
<dbReference type="EMDB" id="EMD-19195"/>
<dbReference type="EMDB" id="EMD-19197"/>
<dbReference type="EMDB" id="EMD-19198"/>
<dbReference type="EMDB" id="EMD-20255"/>
<dbReference type="EMDB" id="EMD-20256"/>
<dbReference type="EMDB" id="EMD-20257"/>
<dbReference type="EMDB" id="EMD-20258"/>
<dbReference type="EMDB" id="EMD-23785"/>
<dbReference type="EMDB" id="EMD-25994"/>
<dbReference type="EMDB" id="EMD-26035"/>
<dbReference type="EMDB" id="EMD-26036"/>
<dbReference type="EMDB" id="EMD-26133"/>
<dbReference type="EMDB" id="EMD-26444"/>
<dbReference type="EMDB" id="EMD-26445"/>
<dbReference type="EMDB" id="EMD-40344"/>
<dbReference type="EMDB" id="EMD-4130"/>
<dbReference type="EMDB" id="EMD-4131"/>
<dbReference type="EMDB" id="EMD-4132"/>
<dbReference type="EMDB" id="EMD-4133"/>
<dbReference type="EMDB" id="EMD-4134"/>
<dbReference type="EMDB" id="EMD-4135"/>
<dbReference type="EMDB" id="EMD-4136"/>
<dbReference type="EMDB" id="EMD-4137"/>
<dbReference type="EMDB" id="EMD-4300"/>
<dbReference type="EMDB" id="EMD-4315"/>
<dbReference type="EMDB" id="EMD-4316"/>
<dbReference type="EMDB" id="EMD-4317"/>
<dbReference type="EMDB" id="EMD-43189"/>
<dbReference type="EMDB" id="EMD-44461"/>
<dbReference type="EMDB" id="EMD-44463"/>
<dbReference type="EMDB" id="EMD-44464"/>
<dbReference type="EMDB" id="EMD-4729"/>
<dbReference type="EMDB" id="EMD-4735"/>
<dbReference type="EMDB" id="EMD-4737"/>
<dbReference type="EMDB" id="EMD-4745"/>
<dbReference type="EMDB" id="EMD-50124"/>
<dbReference type="EMDB" id="EMD-50125"/>
<dbReference type="EMDB" id="EMD-50126"/>
<dbReference type="EMDB" id="EMD-7834"/>
<dbReference type="EMDB" id="EMD-7836"/>
<dbReference type="EMDB" id="EMD-9237"/>
<dbReference type="EMDB" id="EMD-9239"/>
<dbReference type="EMDB" id="EMD-9240"/>
<dbReference type="EMDB" id="EMD-9242"/>
<dbReference type="SMR" id="G1T6D1"/>
<dbReference type="FunCoup" id="G1T6D1">
    <property type="interactions" value="1535"/>
</dbReference>
<dbReference type="IntAct" id="G1T6D1">
    <property type="interactions" value="1"/>
</dbReference>
<dbReference type="STRING" id="9986.ENSOCUP00000011964"/>
<dbReference type="PaxDb" id="9986-ENSOCUP00000011964"/>
<dbReference type="Ensembl" id="ENSOCUT00000013913.3">
    <property type="protein sequence ID" value="ENSOCUP00000011964.2"/>
    <property type="gene ID" value="ENSOCUG00000013915.3"/>
</dbReference>
<dbReference type="GeneID" id="100008824"/>
<dbReference type="KEGG" id="ocu:100008824"/>
<dbReference type="CTD" id="9349"/>
<dbReference type="eggNOG" id="KOG0901">
    <property type="taxonomic scope" value="Eukaryota"/>
</dbReference>
<dbReference type="GeneTree" id="ENSGT00390000004690"/>
<dbReference type="HOGENOM" id="CLU_095071_3_0_1"/>
<dbReference type="InParanoid" id="G1T6D1"/>
<dbReference type="OMA" id="MIQMQTR"/>
<dbReference type="OrthoDB" id="407959at2759"/>
<dbReference type="TreeFam" id="TF300913"/>
<dbReference type="Proteomes" id="UP000001811">
    <property type="component" value="Chromosome 19"/>
</dbReference>
<dbReference type="Bgee" id="ENSOCUG00000013915">
    <property type="expression patterns" value="Expressed in upper lobe of left lung and 15 other cell types or tissues"/>
</dbReference>
<dbReference type="GO" id="GO:0022625">
    <property type="term" value="C:cytosolic large ribosomal subunit"/>
    <property type="evidence" value="ECO:0007669"/>
    <property type="project" value="TreeGrafter"/>
</dbReference>
<dbReference type="GO" id="GO:0070180">
    <property type="term" value="F:large ribosomal subunit rRNA binding"/>
    <property type="evidence" value="ECO:0007669"/>
    <property type="project" value="TreeGrafter"/>
</dbReference>
<dbReference type="GO" id="GO:0003735">
    <property type="term" value="F:structural constituent of ribosome"/>
    <property type="evidence" value="ECO:0007669"/>
    <property type="project" value="InterPro"/>
</dbReference>
<dbReference type="GO" id="GO:0006412">
    <property type="term" value="P:translation"/>
    <property type="evidence" value="ECO:0007669"/>
    <property type="project" value="InterPro"/>
</dbReference>
<dbReference type="CDD" id="cd00337">
    <property type="entry name" value="Ribosomal_uL14"/>
    <property type="match status" value="1"/>
</dbReference>
<dbReference type="FunFam" id="2.40.150.20:FF:000003">
    <property type="entry name" value="60S ribosomal protein L23"/>
    <property type="match status" value="1"/>
</dbReference>
<dbReference type="Gene3D" id="2.40.150.20">
    <property type="entry name" value="Ribosomal protein L14"/>
    <property type="match status" value="1"/>
</dbReference>
<dbReference type="HAMAP" id="MF_01367">
    <property type="entry name" value="Ribosomal_uL14"/>
    <property type="match status" value="1"/>
</dbReference>
<dbReference type="InterPro" id="IPR000218">
    <property type="entry name" value="Ribosomal_uL14"/>
</dbReference>
<dbReference type="InterPro" id="IPR019972">
    <property type="entry name" value="Ribosomal_uL14_CS"/>
</dbReference>
<dbReference type="InterPro" id="IPR036853">
    <property type="entry name" value="Ribosomal_uL14_sf"/>
</dbReference>
<dbReference type="NCBIfam" id="NF006344">
    <property type="entry name" value="PRK08571.1"/>
    <property type="match status" value="1"/>
</dbReference>
<dbReference type="PANTHER" id="PTHR11761">
    <property type="entry name" value="50S/60S RIBOSOMAL PROTEIN L14/L23"/>
    <property type="match status" value="1"/>
</dbReference>
<dbReference type="PANTHER" id="PTHR11761:SF8">
    <property type="entry name" value="LARGE RIBOSOMAL SUBUNIT PROTEIN UL14"/>
    <property type="match status" value="1"/>
</dbReference>
<dbReference type="Pfam" id="PF00238">
    <property type="entry name" value="Ribosomal_L14"/>
    <property type="match status" value="1"/>
</dbReference>
<dbReference type="SMART" id="SM01374">
    <property type="entry name" value="Ribosomal_L14"/>
    <property type="match status" value="1"/>
</dbReference>
<dbReference type="SUPFAM" id="SSF50193">
    <property type="entry name" value="Ribosomal protein L14"/>
    <property type="match status" value="1"/>
</dbReference>
<dbReference type="PROSITE" id="PS00049">
    <property type="entry name" value="RIBOSOMAL_L14"/>
    <property type="match status" value="1"/>
</dbReference>
<feature type="chain" id="PRO_0000460113" description="Large ribosomal subunit protein uL14">
    <location>
        <begin position="1"/>
        <end position="140"/>
    </location>
</feature>
<feature type="modified residue" description="Phosphoserine" evidence="1">
    <location>
        <position position="17"/>
    </location>
</feature>
<feature type="modified residue" description="Phosphotyrosine" evidence="1">
    <location>
        <position position="38"/>
    </location>
</feature>
<proteinExistence type="evidence at protein level"/>
<sequence>MSKRGRGGSSGAKFRISLGLPVGAVINCADNTGAKNLYIISVKGIKGRLNRLPAAGVGDMVMATVKKGKPELRKKVHPAVVIRQRKSYRRKDGVFLYFEDNAGVIVNNKGEMKGSAITGPVAKECADLWPRIASNAGSIA</sequence>
<reference key="1">
    <citation type="journal article" date="2011" name="Nature">
        <title>A high-resolution map of human evolutionary constraint using 29 mammals.</title>
        <authorList>
            <person name="Lindblad-Toh K."/>
            <person name="Garber M."/>
            <person name="Zuk O."/>
            <person name="Lin M.F."/>
            <person name="Parker B.J."/>
            <person name="Washietl S."/>
            <person name="Kheradpour P."/>
            <person name="Ernst J."/>
            <person name="Jordan G."/>
            <person name="Mauceli E."/>
            <person name="Ward L.D."/>
            <person name="Lowe C.B."/>
            <person name="Holloway A.K."/>
            <person name="Clamp M."/>
            <person name="Gnerre S."/>
            <person name="Alfoldi J."/>
            <person name="Beal K."/>
            <person name="Chang J."/>
            <person name="Clawson H."/>
            <person name="Cuff J."/>
            <person name="Di Palma F."/>
            <person name="Fitzgerald S."/>
            <person name="Flicek P."/>
            <person name="Guttman M."/>
            <person name="Hubisz M.J."/>
            <person name="Jaffe D.B."/>
            <person name="Jungreis I."/>
            <person name="Kent W.J."/>
            <person name="Kostka D."/>
            <person name="Lara M."/>
            <person name="Martins A.L."/>
            <person name="Massingham T."/>
            <person name="Moltke I."/>
            <person name="Raney B.J."/>
            <person name="Rasmussen M.D."/>
            <person name="Robinson J."/>
            <person name="Stark A."/>
            <person name="Vilella A.J."/>
            <person name="Wen J."/>
            <person name="Xie X."/>
            <person name="Zody M.C."/>
            <person name="Baldwin J."/>
            <person name="Bloom T."/>
            <person name="Chin C.W."/>
            <person name="Heiman D."/>
            <person name="Nicol R."/>
            <person name="Nusbaum C."/>
            <person name="Young S."/>
            <person name="Wilkinson J."/>
            <person name="Worley K.C."/>
            <person name="Kovar C.L."/>
            <person name="Muzny D.M."/>
            <person name="Gibbs R.A."/>
            <person name="Cree A."/>
            <person name="Dihn H.H."/>
            <person name="Fowler G."/>
            <person name="Jhangiani S."/>
            <person name="Joshi V."/>
            <person name="Lee S."/>
            <person name="Lewis L.R."/>
            <person name="Nazareth L.V."/>
            <person name="Okwuonu G."/>
            <person name="Santibanez J."/>
            <person name="Warren W.C."/>
            <person name="Mardis E.R."/>
            <person name="Weinstock G.M."/>
            <person name="Wilson R.K."/>
            <person name="Delehaunty K."/>
            <person name="Dooling D."/>
            <person name="Fronik C."/>
            <person name="Fulton L."/>
            <person name="Fulton B."/>
            <person name="Graves T."/>
            <person name="Minx P."/>
            <person name="Sodergren E."/>
            <person name="Birney E."/>
            <person name="Margulies E.H."/>
            <person name="Herrero J."/>
            <person name="Green E.D."/>
            <person name="Haussler D."/>
            <person name="Siepel A."/>
            <person name="Goldman N."/>
            <person name="Pollard K.S."/>
            <person name="Pedersen J.S."/>
            <person name="Lander E.S."/>
            <person name="Kellis M."/>
        </authorList>
    </citation>
    <scope>NUCLEOTIDE SEQUENCE [LARGE SCALE GENOMIC DNA]</scope>
    <source>
        <strain>Thorbecke</strain>
    </source>
</reference>
<reference evidence="15 16" key="2">
    <citation type="journal article" date="2015" name="Nature">
        <title>Structural basis for stop codon recognition in eukaryotes.</title>
        <authorList>
            <person name="Brown A."/>
            <person name="Shao S."/>
            <person name="Murray J."/>
            <person name="Hegde R.S."/>
            <person name="Ramakrishnan V."/>
        </authorList>
    </citation>
    <scope>STRUCTURE BY ELECTRON MICROSCOPY (3.45 ANGSTROMS) OF 10-140 OF RIBOSOME</scope>
    <scope>FUNCTION</scope>
    <scope>SUBCELLULAR LOCATION</scope>
    <scope>SUBUNIT</scope>
</reference>
<reference evidence="17 18" key="3">
    <citation type="journal article" date="2016" name="Cell">
        <title>Decoding mammalian ribosome-mRNA states by translational GTPase complexes.</title>
        <authorList>
            <person name="Shao S."/>
            <person name="Murray J."/>
            <person name="Brown A."/>
            <person name="Taunton J."/>
            <person name="Ramakrishnan V."/>
            <person name="Hegde R.S."/>
        </authorList>
    </citation>
    <scope>STRUCTURE BY ELECTRON MICROSCOPY (3.31 ANGSTROMS) OF RIBOSOME</scope>
    <scope>FUNCTION</scope>
    <scope>SUBCELLULAR LOCATION</scope>
    <scope>SUBUNIT</scope>
</reference>
<reference evidence="21" key="4">
    <citation type="journal article" date="2018" name="Cell Rep.">
        <title>tRNA translocation by the eukaryotic 80S ribosome and the impact of GTP hydrolysis.</title>
        <authorList>
            <person name="Flis J."/>
            <person name="Holm M."/>
            <person name="Rundlet E.J."/>
            <person name="Loerke J."/>
            <person name="Hilal T."/>
            <person name="Dabrowski M."/>
            <person name="Burger J."/>
            <person name="Mielke T."/>
            <person name="Blanchard S.C."/>
            <person name="Spahn C.M.T."/>
            <person name="Budkevich T.V."/>
        </authorList>
    </citation>
    <scope>STRUCTURE BY ELECTRON MICROSCOPY (3.60 ANGSTROMS) OF 12-140 OF RIBOSOME</scope>
    <scope>FUNCTION</scope>
    <scope>SUBCELLULAR LOCATION</scope>
    <scope>SUBUNIT</scope>
</reference>
<reference evidence="19 20" key="5">
    <citation type="journal article" date="2018" name="Elife">
        <title>Dual tRNA mimicry in the Cricket paralysis virus IRES uncovers an unexpected similarity with the Hepatitis C Virus IRES.</title>
        <authorList>
            <person name="Pisareva V.P."/>
            <person name="Pisarev A.V."/>
            <person name="Fernandez I.S."/>
        </authorList>
    </citation>
    <scope>STRUCTURE BY ELECTRON MICROSCOPY (3.20 ANGSTROMS) OF RIBOSOME</scope>
    <scope>SUBCELLULAR LOCATION</scope>
    <scope>SUBUNIT</scope>
</reference>
<reference evidence="24 25" key="6">
    <citation type="journal article" date="2018" name="Elife">
        <title>Structures of translationally inactive mammalian ribosomes.</title>
        <authorList>
            <person name="Brown A."/>
            <person name="Baird M.R."/>
            <person name="Yip M.C."/>
            <person name="Murray J."/>
            <person name="Shao S."/>
        </authorList>
    </citation>
    <scope>STRUCTURE BY ELECTRON MICROSCOPY (3.30 ANGSTROMS) OF 10-140 OF RIBOSOME</scope>
    <scope>SUBCELLULAR LOCATION</scope>
    <scope>SUBUNIT</scope>
</reference>
<reference evidence="22 23" key="7">
    <citation type="journal article" date="2018" name="Mol. Cell">
        <title>ZNF598 is a quality control sensor of collided ribosomes.</title>
        <authorList>
            <person name="Juszkiewicz S."/>
            <person name="Chandrasekaran V."/>
            <person name="Lin Z."/>
            <person name="Kraatz S."/>
            <person name="Ramakrishnan V."/>
            <person name="Hegde R.S."/>
        </authorList>
    </citation>
    <scope>STRUCTURE BY ELECTRON MICROSCOPY (3.80 ANGSTROMS) OF RIBOSOME</scope>
    <scope>SUBCELLULAR LOCATION</scope>
    <scope>SUBUNIT</scope>
</reference>
<reference evidence="28 29" key="8">
    <citation type="journal article" date="2019" name="Elife">
        <title>Structural and mutational analysis of the ribosome-arresting human XBP1u.</title>
        <authorList>
            <person name="Shanmuganathan V."/>
            <person name="Schiller N."/>
            <person name="Magoulopoulou A."/>
            <person name="Cheng J."/>
            <person name="Braunger K."/>
            <person name="Cymer F."/>
            <person name="Berninghausen O."/>
            <person name="Beatrix B."/>
            <person name="Kohno K."/>
            <person name="von Heijne G."/>
            <person name="Beckmann R."/>
        </authorList>
    </citation>
    <scope>STRUCTURE BY ELECTRON MICROSCOPY (3.00 ANGSTROMS) OF 10-140 OF RIBOSOME</scope>
    <scope>SUBCELLULAR LOCATION</scope>
    <scope>SUBUNIT</scope>
</reference>
<reference evidence="26 27" key="9">
    <citation type="journal article" date="2019" name="EMBO J.">
        <title>The Israeli acute paralysis virus IRES captures host ribosomes by mimicking a ribosomal state with hybrid tRNAs.</title>
        <authorList>
            <person name="Acosta-Reyes F."/>
            <person name="Neupane R."/>
            <person name="Frank J."/>
            <person name="Fernandez I.S."/>
        </authorList>
    </citation>
    <scope>STRUCTURE BY ELECTRON MICROSCOPY (3.10 ANGSTROMS) OF RIBOSOME</scope>
    <scope>SUBCELLULAR LOCATION</scope>
    <scope>SUBUNIT</scope>
</reference>
<reference evidence="30" key="10">
    <citation type="journal article" date="2019" name="Nat. Struct. Mol. Biol.">
        <title>Mechanism of ribosome stalling during translation of a poly(A) tail.</title>
        <authorList>
            <person name="Chandrasekaran V."/>
            <person name="Juszkiewicz S."/>
            <person name="Choi J."/>
            <person name="Puglisi J.D."/>
            <person name="Brown A."/>
            <person name="Shao S."/>
            <person name="Ramakrishnan V."/>
            <person name="Hegde R.S."/>
        </authorList>
    </citation>
    <scope>STRUCTURE BY ELECTRON MICROSCOPY (2.80 ANGSTROMS) OF RIBOSOME</scope>
    <scope>SUBCELLULAR LOCATION</scope>
    <scope>SUBUNIT</scope>
</reference>
<reference evidence="31 32" key="11">
    <citation type="journal article" date="2020" name="Cell Rep.">
        <title>The Halastavi arva virus intergenic region IRES promotes translation by the simplest possible initiation mechanism.</title>
        <authorList>
            <person name="Abaeva I.S."/>
            <person name="Vicens Q."/>
            <person name="Bochler A."/>
            <person name="Soufari H."/>
            <person name="Simonetti A."/>
            <person name="Pestova T.V."/>
            <person name="Hashem Y."/>
            <person name="Hellen C.U.T."/>
        </authorList>
    </citation>
    <scope>STRUCTURE BY ELECTRON MICROSCOPY (3.49 ANGSTROMS) OF 10-1404 OF RIBOSOME</scope>
    <scope>SUBCELLULAR LOCATION</scope>
    <scope>SUBUNIT</scope>
</reference>
<reference evidence="34 35" key="12">
    <citation type="journal article" date="2022" name="Mol. Cell">
        <title>Direct epitranscriptomic regulation of mammalian translation initiation through N4-acetylcytidine.</title>
        <authorList>
            <person name="Arango D."/>
            <person name="Sturgill D."/>
            <person name="Yang R."/>
            <person name="Kanai T."/>
            <person name="Bauer P."/>
            <person name="Roy J."/>
            <person name="Wang Z."/>
            <person name="Hosogane M."/>
            <person name="Schiffers S."/>
            <person name="Oberdoerffer S."/>
        </authorList>
    </citation>
    <scope>STRUCTURE BY ELECTRON MICROSCOPY (2.80 ANGSTROMS) OF 79-133 OF RIBOSOME</scope>
    <scope>SUBCELLULAR LOCATION</scope>
    <scope>SUBUNIT</scope>
</reference>
<reference evidence="33" key="13">
    <citation type="journal article" date="2023" name="Nature">
        <title>A molecular network of conserved factors keeps ribosomes dormant in the egg.</title>
        <authorList>
            <person name="Leesch F."/>
            <person name="Lorenzo-Orts L."/>
            <person name="Pribitzer C."/>
            <person name="Grishkovskaya I."/>
            <person name="Roehsner J."/>
            <person name="Chugunova A."/>
            <person name="Matzinger M."/>
            <person name="Roitinger E."/>
            <person name="Belacic K."/>
            <person name="Kandolf S."/>
            <person name="Lin T.Y."/>
            <person name="Mechtler K."/>
            <person name="Meinhart A."/>
            <person name="Haselbach D."/>
            <person name="Pauli A."/>
        </authorList>
    </citation>
    <scope>STRUCTURE BY ELECTRON MICROSCOPY (2.30 ANGSTROMS) OF RIBOSOME</scope>
    <scope>SUBCELLULAR LOCATION</scope>
    <scope>SUBUNIT</scope>
</reference>
<name>RL23_RABIT</name>
<accession>G1T6D1</accession>